<comment type="function">
    <text evidence="1">Involved in the binding of tRNA to the ribosomes.</text>
</comment>
<comment type="subunit">
    <text evidence="1">Part of the 30S ribosomal subunit.</text>
</comment>
<comment type="similarity">
    <text evidence="1">Belongs to the universal ribosomal protein uS10 family.</text>
</comment>
<proteinExistence type="inferred from homology"/>
<evidence type="ECO:0000255" key="1">
    <source>
        <dbReference type="HAMAP-Rule" id="MF_00508"/>
    </source>
</evidence>
<evidence type="ECO:0000305" key="2"/>
<gene>
    <name evidence="1" type="primary">rpsJ</name>
    <name type="ordered locus">Bphy_2841</name>
</gene>
<reference key="1">
    <citation type="journal article" date="2014" name="Stand. Genomic Sci.">
        <title>Complete genome sequence of Burkholderia phymatum STM815(T), a broad host range and efficient nitrogen-fixing symbiont of Mimosa species.</title>
        <authorList>
            <person name="Moulin L."/>
            <person name="Klonowska A."/>
            <person name="Caroline B."/>
            <person name="Booth K."/>
            <person name="Vriezen J.A."/>
            <person name="Melkonian R."/>
            <person name="James E.K."/>
            <person name="Young J.P."/>
            <person name="Bena G."/>
            <person name="Hauser L."/>
            <person name="Land M."/>
            <person name="Kyrpides N."/>
            <person name="Bruce D."/>
            <person name="Chain P."/>
            <person name="Copeland A."/>
            <person name="Pitluck S."/>
            <person name="Woyke T."/>
            <person name="Lizotte-Waniewski M."/>
            <person name="Bristow J."/>
            <person name="Riley M."/>
        </authorList>
    </citation>
    <scope>NUCLEOTIDE SEQUENCE [LARGE SCALE GENOMIC DNA]</scope>
    <source>
        <strain>DSM 17167 / CIP 108236 / LMG 21445 / STM815</strain>
    </source>
</reference>
<accession>B2JIG7</accession>
<organism>
    <name type="scientific">Paraburkholderia phymatum (strain DSM 17167 / CIP 108236 / LMG 21445 / STM815)</name>
    <name type="common">Burkholderia phymatum</name>
    <dbReference type="NCBI Taxonomy" id="391038"/>
    <lineage>
        <taxon>Bacteria</taxon>
        <taxon>Pseudomonadati</taxon>
        <taxon>Pseudomonadota</taxon>
        <taxon>Betaproteobacteria</taxon>
        <taxon>Burkholderiales</taxon>
        <taxon>Burkholderiaceae</taxon>
        <taxon>Paraburkholderia</taxon>
    </lineage>
</organism>
<dbReference type="EMBL" id="CP001043">
    <property type="protein sequence ID" value="ACC72013.1"/>
    <property type="molecule type" value="Genomic_DNA"/>
</dbReference>
<dbReference type="RefSeq" id="WP_006998489.1">
    <property type="nucleotide sequence ID" value="NZ_CADFGH010000028.1"/>
</dbReference>
<dbReference type="SMR" id="B2JIG7"/>
<dbReference type="STRING" id="391038.Bphy_2841"/>
<dbReference type="GeneID" id="97310991"/>
<dbReference type="KEGG" id="bph:Bphy_2841"/>
<dbReference type="eggNOG" id="COG0051">
    <property type="taxonomic scope" value="Bacteria"/>
</dbReference>
<dbReference type="HOGENOM" id="CLU_122625_1_3_4"/>
<dbReference type="OrthoDB" id="9804464at2"/>
<dbReference type="Proteomes" id="UP000001192">
    <property type="component" value="Chromosome 1"/>
</dbReference>
<dbReference type="GO" id="GO:1990904">
    <property type="term" value="C:ribonucleoprotein complex"/>
    <property type="evidence" value="ECO:0007669"/>
    <property type="project" value="UniProtKB-KW"/>
</dbReference>
<dbReference type="GO" id="GO:0005840">
    <property type="term" value="C:ribosome"/>
    <property type="evidence" value="ECO:0007669"/>
    <property type="project" value="UniProtKB-KW"/>
</dbReference>
<dbReference type="GO" id="GO:0003735">
    <property type="term" value="F:structural constituent of ribosome"/>
    <property type="evidence" value="ECO:0007669"/>
    <property type="project" value="InterPro"/>
</dbReference>
<dbReference type="GO" id="GO:0000049">
    <property type="term" value="F:tRNA binding"/>
    <property type="evidence" value="ECO:0007669"/>
    <property type="project" value="UniProtKB-UniRule"/>
</dbReference>
<dbReference type="GO" id="GO:0006412">
    <property type="term" value="P:translation"/>
    <property type="evidence" value="ECO:0007669"/>
    <property type="project" value="UniProtKB-UniRule"/>
</dbReference>
<dbReference type="FunFam" id="3.30.70.600:FF:000001">
    <property type="entry name" value="30S ribosomal protein S10"/>
    <property type="match status" value="1"/>
</dbReference>
<dbReference type="Gene3D" id="3.30.70.600">
    <property type="entry name" value="Ribosomal protein S10 domain"/>
    <property type="match status" value="1"/>
</dbReference>
<dbReference type="HAMAP" id="MF_00508">
    <property type="entry name" value="Ribosomal_uS10"/>
    <property type="match status" value="1"/>
</dbReference>
<dbReference type="InterPro" id="IPR001848">
    <property type="entry name" value="Ribosomal_uS10"/>
</dbReference>
<dbReference type="InterPro" id="IPR018268">
    <property type="entry name" value="Ribosomal_uS10_CS"/>
</dbReference>
<dbReference type="InterPro" id="IPR027486">
    <property type="entry name" value="Ribosomal_uS10_dom"/>
</dbReference>
<dbReference type="InterPro" id="IPR036838">
    <property type="entry name" value="Ribosomal_uS10_dom_sf"/>
</dbReference>
<dbReference type="NCBIfam" id="NF001861">
    <property type="entry name" value="PRK00596.1"/>
    <property type="match status" value="1"/>
</dbReference>
<dbReference type="NCBIfam" id="TIGR01049">
    <property type="entry name" value="rpsJ_bact"/>
    <property type="match status" value="1"/>
</dbReference>
<dbReference type="PANTHER" id="PTHR11700">
    <property type="entry name" value="30S RIBOSOMAL PROTEIN S10 FAMILY MEMBER"/>
    <property type="match status" value="1"/>
</dbReference>
<dbReference type="Pfam" id="PF00338">
    <property type="entry name" value="Ribosomal_S10"/>
    <property type="match status" value="1"/>
</dbReference>
<dbReference type="PRINTS" id="PR00971">
    <property type="entry name" value="RIBOSOMALS10"/>
</dbReference>
<dbReference type="SMART" id="SM01403">
    <property type="entry name" value="Ribosomal_S10"/>
    <property type="match status" value="1"/>
</dbReference>
<dbReference type="SUPFAM" id="SSF54999">
    <property type="entry name" value="Ribosomal protein S10"/>
    <property type="match status" value="1"/>
</dbReference>
<dbReference type="PROSITE" id="PS00361">
    <property type="entry name" value="RIBOSOMAL_S10"/>
    <property type="match status" value="1"/>
</dbReference>
<feature type="chain" id="PRO_1000127093" description="Small ribosomal subunit protein uS10">
    <location>
        <begin position="1"/>
        <end position="103"/>
    </location>
</feature>
<protein>
    <recommendedName>
        <fullName evidence="1">Small ribosomal subunit protein uS10</fullName>
    </recommendedName>
    <alternativeName>
        <fullName evidence="2">30S ribosomal protein S10</fullName>
    </alternativeName>
</protein>
<sequence>MQNQKIRIRLKAFDYRLIDQSAAEIVDTAKRTGAIVRGPVPLPTRIQRFDILRSPHVNKTSRDQLEIRTHQRLMDIVDPTDKTVDALMKLDLPAGVDVEIKLQ</sequence>
<name>RS10_PARP8</name>
<keyword id="KW-1185">Reference proteome</keyword>
<keyword id="KW-0687">Ribonucleoprotein</keyword>
<keyword id="KW-0689">Ribosomal protein</keyword>